<accession>Q58987</accession>
<name>PUR7_METJA</name>
<evidence type="ECO:0000305" key="1"/>
<evidence type="ECO:0007829" key="2">
    <source>
        <dbReference type="PDB" id="2Z02"/>
    </source>
</evidence>
<comment type="catalytic activity">
    <reaction>
        <text>5-amino-1-(5-phospho-D-ribosyl)imidazole-4-carboxylate + L-aspartate + ATP = (2S)-2-[5-amino-1-(5-phospho-beta-D-ribosyl)imidazole-4-carboxamido]succinate + ADP + phosphate + 2 H(+)</text>
        <dbReference type="Rhea" id="RHEA:22628"/>
        <dbReference type="ChEBI" id="CHEBI:15378"/>
        <dbReference type="ChEBI" id="CHEBI:29991"/>
        <dbReference type="ChEBI" id="CHEBI:30616"/>
        <dbReference type="ChEBI" id="CHEBI:43474"/>
        <dbReference type="ChEBI" id="CHEBI:58443"/>
        <dbReference type="ChEBI" id="CHEBI:77657"/>
        <dbReference type="ChEBI" id="CHEBI:456216"/>
        <dbReference type="EC" id="6.3.2.6"/>
    </reaction>
</comment>
<comment type="pathway">
    <text>Purine metabolism; IMP biosynthesis via de novo pathway; 5-amino-1-(5-phospho-D-ribosyl)imidazole-4-carboxamide from 5-amino-1-(5-phospho-D-ribosyl)imidazole-4-carboxylate: step 1/2.</text>
</comment>
<comment type="similarity">
    <text evidence="1">Belongs to the SAICAR synthetase family.</text>
</comment>
<dbReference type="EC" id="6.3.2.6"/>
<dbReference type="EMBL" id="L77117">
    <property type="protein sequence ID" value="AAB99610.1"/>
    <property type="molecule type" value="Genomic_DNA"/>
</dbReference>
<dbReference type="PIR" id="G64498">
    <property type="entry name" value="G64498"/>
</dbReference>
<dbReference type="RefSeq" id="WP_010871116.1">
    <property type="nucleotide sequence ID" value="NC_000909.1"/>
</dbReference>
<dbReference type="PDB" id="2YZL">
    <property type="method" value="X-ray"/>
    <property type="resolution" value="2.20 A"/>
    <property type="chains" value="A=1-242"/>
</dbReference>
<dbReference type="PDB" id="2Z02">
    <property type="method" value="X-ray"/>
    <property type="resolution" value="2.03 A"/>
    <property type="chains" value="A/B=1-242"/>
</dbReference>
<dbReference type="PDBsum" id="2YZL"/>
<dbReference type="PDBsum" id="2Z02"/>
<dbReference type="SMR" id="Q58987"/>
<dbReference type="FunCoup" id="Q58987">
    <property type="interactions" value="136"/>
</dbReference>
<dbReference type="STRING" id="243232.MJ_1592"/>
<dbReference type="PaxDb" id="243232-MJ_1592"/>
<dbReference type="EnsemblBacteria" id="AAB99610">
    <property type="protein sequence ID" value="AAB99610"/>
    <property type="gene ID" value="MJ_1592"/>
</dbReference>
<dbReference type="GeneID" id="1452500"/>
<dbReference type="KEGG" id="mja:MJ_1592"/>
<dbReference type="eggNOG" id="arCOG04421">
    <property type="taxonomic scope" value="Archaea"/>
</dbReference>
<dbReference type="HOGENOM" id="CLU_061495_2_0_2"/>
<dbReference type="InParanoid" id="Q58987"/>
<dbReference type="OrthoDB" id="10775at2157"/>
<dbReference type="PhylomeDB" id="Q58987"/>
<dbReference type="BRENDA" id="6.3.2.6">
    <property type="organism ID" value="3260"/>
</dbReference>
<dbReference type="UniPathway" id="UPA00074">
    <property type="reaction ID" value="UER00131"/>
</dbReference>
<dbReference type="EvolutionaryTrace" id="Q58987"/>
<dbReference type="Proteomes" id="UP000000805">
    <property type="component" value="Chromosome"/>
</dbReference>
<dbReference type="GO" id="GO:0005524">
    <property type="term" value="F:ATP binding"/>
    <property type="evidence" value="ECO:0007669"/>
    <property type="project" value="UniProtKB-KW"/>
</dbReference>
<dbReference type="GO" id="GO:0004639">
    <property type="term" value="F:phosphoribosylaminoimidazolesuccinocarboxamide synthase activity"/>
    <property type="evidence" value="ECO:0007669"/>
    <property type="project" value="UniProtKB-UniRule"/>
</dbReference>
<dbReference type="GO" id="GO:0006189">
    <property type="term" value="P:'de novo' IMP biosynthetic process"/>
    <property type="evidence" value="ECO:0007669"/>
    <property type="project" value="UniProtKB-UniRule"/>
</dbReference>
<dbReference type="GO" id="GO:0009236">
    <property type="term" value="P:cobalamin biosynthetic process"/>
    <property type="evidence" value="ECO:0007669"/>
    <property type="project" value="InterPro"/>
</dbReference>
<dbReference type="CDD" id="cd01415">
    <property type="entry name" value="SAICAR_synt_PurC"/>
    <property type="match status" value="1"/>
</dbReference>
<dbReference type="FunFam" id="3.30.200.20:FF:000086">
    <property type="entry name" value="Phosphoribosylaminoimidazole-succinocarboxamide synthase"/>
    <property type="match status" value="1"/>
</dbReference>
<dbReference type="FunFam" id="3.30.470.20:FF:000006">
    <property type="entry name" value="Phosphoribosylaminoimidazole-succinocarboxamide synthase"/>
    <property type="match status" value="1"/>
</dbReference>
<dbReference type="Gene3D" id="3.30.470.20">
    <property type="entry name" value="ATP-grasp fold, B domain"/>
    <property type="match status" value="1"/>
</dbReference>
<dbReference type="Gene3D" id="3.30.200.20">
    <property type="entry name" value="Phosphorylase Kinase, domain 1"/>
    <property type="match status" value="1"/>
</dbReference>
<dbReference type="HAMAP" id="MF_00137">
    <property type="entry name" value="SAICAR_synth"/>
    <property type="match status" value="1"/>
</dbReference>
<dbReference type="InterPro" id="IPR028923">
    <property type="entry name" value="SAICAR_synt/ADE2_N"/>
</dbReference>
<dbReference type="InterPro" id="IPR033934">
    <property type="entry name" value="SAICAR_synt_PurC"/>
</dbReference>
<dbReference type="InterPro" id="IPR001636">
    <property type="entry name" value="SAICAR_synth"/>
</dbReference>
<dbReference type="InterPro" id="IPR050089">
    <property type="entry name" value="SAICAR_synthetase"/>
</dbReference>
<dbReference type="InterPro" id="IPR018236">
    <property type="entry name" value="SAICAR_synthetase_CS"/>
</dbReference>
<dbReference type="NCBIfam" id="TIGR00081">
    <property type="entry name" value="purC"/>
    <property type="match status" value="1"/>
</dbReference>
<dbReference type="PANTHER" id="PTHR43599">
    <property type="entry name" value="MULTIFUNCTIONAL PROTEIN ADE2"/>
    <property type="match status" value="1"/>
</dbReference>
<dbReference type="PANTHER" id="PTHR43599:SF3">
    <property type="entry name" value="SI:DKEY-6E2.2"/>
    <property type="match status" value="1"/>
</dbReference>
<dbReference type="Pfam" id="PF01259">
    <property type="entry name" value="SAICAR_synt"/>
    <property type="match status" value="1"/>
</dbReference>
<dbReference type="SUPFAM" id="SSF56104">
    <property type="entry name" value="SAICAR synthase-like"/>
    <property type="match status" value="1"/>
</dbReference>
<dbReference type="PROSITE" id="PS01057">
    <property type="entry name" value="SAICAR_SYNTHETASE_1"/>
    <property type="match status" value="1"/>
</dbReference>
<dbReference type="PROSITE" id="PS01058">
    <property type="entry name" value="SAICAR_SYNTHETASE_2"/>
    <property type="match status" value="1"/>
</dbReference>
<organism>
    <name type="scientific">Methanocaldococcus jannaschii (strain ATCC 43067 / DSM 2661 / JAL-1 / JCM 10045 / NBRC 100440)</name>
    <name type="common">Methanococcus jannaschii</name>
    <dbReference type="NCBI Taxonomy" id="243232"/>
    <lineage>
        <taxon>Archaea</taxon>
        <taxon>Methanobacteriati</taxon>
        <taxon>Methanobacteriota</taxon>
        <taxon>Methanomada group</taxon>
        <taxon>Methanococci</taxon>
        <taxon>Methanococcales</taxon>
        <taxon>Methanocaldococcaceae</taxon>
        <taxon>Methanocaldococcus</taxon>
    </lineage>
</organism>
<protein>
    <recommendedName>
        <fullName>Phosphoribosylaminoimidazole-succinocarboxamide synthase</fullName>
        <ecNumber>6.3.2.6</ecNumber>
    </recommendedName>
    <alternativeName>
        <fullName>SAICAR synthetase</fullName>
    </alternativeName>
</protein>
<reference key="1">
    <citation type="journal article" date="1996" name="Science">
        <title>Complete genome sequence of the methanogenic archaeon, Methanococcus jannaschii.</title>
        <authorList>
            <person name="Bult C.J."/>
            <person name="White O."/>
            <person name="Olsen G.J."/>
            <person name="Zhou L."/>
            <person name="Fleischmann R.D."/>
            <person name="Sutton G.G."/>
            <person name="Blake J.A."/>
            <person name="FitzGerald L.M."/>
            <person name="Clayton R.A."/>
            <person name="Gocayne J.D."/>
            <person name="Kerlavage A.R."/>
            <person name="Dougherty B.A."/>
            <person name="Tomb J.-F."/>
            <person name="Adams M.D."/>
            <person name="Reich C.I."/>
            <person name="Overbeek R."/>
            <person name="Kirkness E.F."/>
            <person name="Weinstock K.G."/>
            <person name="Merrick J.M."/>
            <person name="Glodek A."/>
            <person name="Scott J.L."/>
            <person name="Geoghagen N.S.M."/>
            <person name="Weidman J.F."/>
            <person name="Fuhrmann J.L."/>
            <person name="Nguyen D."/>
            <person name="Utterback T.R."/>
            <person name="Kelley J.M."/>
            <person name="Peterson J.D."/>
            <person name="Sadow P.W."/>
            <person name="Hanna M.C."/>
            <person name="Cotton M.D."/>
            <person name="Roberts K.M."/>
            <person name="Hurst M.A."/>
            <person name="Kaine B.P."/>
            <person name="Borodovsky M."/>
            <person name="Klenk H.-P."/>
            <person name="Fraser C.M."/>
            <person name="Smith H.O."/>
            <person name="Woese C.R."/>
            <person name="Venter J.C."/>
        </authorList>
    </citation>
    <scope>NUCLEOTIDE SEQUENCE [LARGE SCALE GENOMIC DNA]</scope>
    <source>
        <strain>ATCC 43067 / DSM 2661 / JAL-1 / JCM 10045 / NBRC 100440</strain>
    </source>
</reference>
<gene>
    <name type="primary">purC</name>
    <name type="ordered locus">MJ1592</name>
</gene>
<proteinExistence type="evidence at protein level"/>
<keyword id="KW-0002">3D-structure</keyword>
<keyword id="KW-0067">ATP-binding</keyword>
<keyword id="KW-0436">Ligase</keyword>
<keyword id="KW-0547">Nucleotide-binding</keyword>
<keyword id="KW-0658">Purine biosynthesis</keyword>
<keyword id="KW-1185">Reference proteome</keyword>
<feature type="chain" id="PRO_0000100909" description="Phosphoribosylaminoimidazole-succinocarboxamide synthase">
    <location>
        <begin position="1"/>
        <end position="242"/>
    </location>
</feature>
<feature type="helix" evidence="2">
    <location>
        <begin position="5"/>
        <end position="8"/>
    </location>
</feature>
<feature type="strand" evidence="2">
    <location>
        <begin position="14"/>
        <end position="16"/>
    </location>
</feature>
<feature type="strand" evidence="2">
    <location>
        <begin position="18"/>
        <end position="24"/>
    </location>
</feature>
<feature type="strand" evidence="2">
    <location>
        <begin position="26"/>
        <end position="34"/>
    </location>
</feature>
<feature type="strand" evidence="2">
    <location>
        <begin position="36"/>
        <end position="40"/>
    </location>
</feature>
<feature type="turn" evidence="2">
    <location>
        <begin position="41"/>
        <end position="44"/>
    </location>
</feature>
<feature type="strand" evidence="2">
    <location>
        <begin position="45"/>
        <end position="48"/>
    </location>
</feature>
<feature type="helix" evidence="2">
    <location>
        <begin position="52"/>
        <end position="69"/>
    </location>
</feature>
<feature type="strand" evidence="2">
    <location>
        <begin position="74"/>
        <end position="80"/>
    </location>
</feature>
<feature type="turn" evidence="2">
    <location>
        <begin position="81"/>
        <end position="83"/>
    </location>
</feature>
<feature type="strand" evidence="2">
    <location>
        <begin position="84"/>
        <end position="88"/>
    </location>
</feature>
<feature type="strand" evidence="2">
    <location>
        <begin position="90"/>
        <end position="92"/>
    </location>
</feature>
<feature type="strand" evidence="2">
    <location>
        <begin position="94"/>
        <end position="102"/>
    </location>
</feature>
<feature type="helix" evidence="2">
    <location>
        <begin position="106"/>
        <end position="110"/>
    </location>
</feature>
<feature type="strand" evidence="2">
    <location>
        <begin position="118"/>
        <end position="128"/>
    </location>
</feature>
<feature type="helix" evidence="2">
    <location>
        <begin position="131"/>
        <end position="133"/>
    </location>
</feature>
<feature type="helix" evidence="2">
    <location>
        <begin position="140"/>
        <end position="145"/>
    </location>
</feature>
<feature type="helix" evidence="2">
    <location>
        <begin position="151"/>
        <end position="174"/>
    </location>
</feature>
<feature type="strand" evidence="2">
    <location>
        <begin position="177"/>
        <end position="184"/>
    </location>
</feature>
<feature type="strand" evidence="2">
    <location>
        <begin position="186"/>
        <end position="189"/>
    </location>
</feature>
<feature type="strand" evidence="2">
    <location>
        <begin position="194"/>
        <end position="196"/>
    </location>
</feature>
<feature type="turn" evidence="2">
    <location>
        <begin position="202"/>
        <end position="204"/>
    </location>
</feature>
<feature type="strand" evidence="2">
    <location>
        <begin position="205"/>
        <end position="209"/>
    </location>
</feature>
<feature type="turn" evidence="2">
    <location>
        <begin position="210"/>
        <end position="212"/>
    </location>
</feature>
<feature type="helix" evidence="2">
    <location>
        <begin position="219"/>
        <end position="222"/>
    </location>
</feature>
<feature type="helix" evidence="2">
    <location>
        <begin position="228"/>
        <end position="238"/>
    </location>
</feature>
<sequence>MEIKLEEILKKQPLYSGKAKSIYEIDDDKVLIEFRDDITAGNGAKHDVKQGKGYLNALISSKLFEALEENGVKTHYIKYIEPRYMIAKKVEIIPIEVIVRNIAAGSLCRRYPFEEGKELPFPIVQFDYKNDEYGDPMLNEDIAVALGLATREELNKIKEIALKVNEVLKKLFDEKGIILVDFKIEIGKDREGNLLVADEISPDTMRLWDKETRDVLDKDVFRKDLGDVIAKYRIVAERLGLL</sequence>